<organism>
    <name type="scientific">Bacteroides fragilis (strain YCH46)</name>
    <dbReference type="NCBI Taxonomy" id="295405"/>
    <lineage>
        <taxon>Bacteria</taxon>
        <taxon>Pseudomonadati</taxon>
        <taxon>Bacteroidota</taxon>
        <taxon>Bacteroidia</taxon>
        <taxon>Bacteroidales</taxon>
        <taxon>Bacteroidaceae</taxon>
        <taxon>Bacteroides</taxon>
    </lineage>
</organism>
<dbReference type="EMBL" id="AP006841">
    <property type="protein sequence ID" value="BAD50907.1"/>
    <property type="molecule type" value="Genomic_DNA"/>
</dbReference>
<dbReference type="RefSeq" id="WP_005791564.1">
    <property type="nucleotide sequence ID" value="NZ_UYXF01000007.1"/>
</dbReference>
<dbReference type="RefSeq" id="YP_101441.1">
    <property type="nucleotide sequence ID" value="NC_006347.1"/>
</dbReference>
<dbReference type="SMR" id="Q64NM5"/>
<dbReference type="STRING" id="295405.BF4164"/>
<dbReference type="GeneID" id="60365731"/>
<dbReference type="KEGG" id="bfr:BF4164"/>
<dbReference type="PATRIC" id="fig|295405.11.peg.4018"/>
<dbReference type="HOGENOM" id="CLU_065898_2_2_10"/>
<dbReference type="OrthoDB" id="9809045at2"/>
<dbReference type="Proteomes" id="UP000002197">
    <property type="component" value="Chromosome"/>
</dbReference>
<dbReference type="GO" id="GO:0015935">
    <property type="term" value="C:small ribosomal subunit"/>
    <property type="evidence" value="ECO:0007669"/>
    <property type="project" value="InterPro"/>
</dbReference>
<dbReference type="GO" id="GO:0019843">
    <property type="term" value="F:rRNA binding"/>
    <property type="evidence" value="ECO:0007669"/>
    <property type="project" value="UniProtKB-UniRule"/>
</dbReference>
<dbReference type="GO" id="GO:0003735">
    <property type="term" value="F:structural constituent of ribosome"/>
    <property type="evidence" value="ECO:0007669"/>
    <property type="project" value="InterPro"/>
</dbReference>
<dbReference type="GO" id="GO:0006412">
    <property type="term" value="P:translation"/>
    <property type="evidence" value="ECO:0007669"/>
    <property type="project" value="UniProtKB-UniRule"/>
</dbReference>
<dbReference type="FunFam" id="3.30.160.20:FF:000001">
    <property type="entry name" value="30S ribosomal protein S5"/>
    <property type="match status" value="1"/>
</dbReference>
<dbReference type="FunFam" id="3.30.230.10:FF:000002">
    <property type="entry name" value="30S ribosomal protein S5"/>
    <property type="match status" value="1"/>
</dbReference>
<dbReference type="Gene3D" id="3.30.160.20">
    <property type="match status" value="1"/>
</dbReference>
<dbReference type="Gene3D" id="3.30.230.10">
    <property type="match status" value="1"/>
</dbReference>
<dbReference type="HAMAP" id="MF_01307_B">
    <property type="entry name" value="Ribosomal_uS5_B"/>
    <property type="match status" value="1"/>
</dbReference>
<dbReference type="InterPro" id="IPR020568">
    <property type="entry name" value="Ribosomal_Su5_D2-typ_SF"/>
</dbReference>
<dbReference type="InterPro" id="IPR000851">
    <property type="entry name" value="Ribosomal_uS5"/>
</dbReference>
<dbReference type="InterPro" id="IPR005712">
    <property type="entry name" value="Ribosomal_uS5_bac-type"/>
</dbReference>
<dbReference type="InterPro" id="IPR005324">
    <property type="entry name" value="Ribosomal_uS5_C"/>
</dbReference>
<dbReference type="InterPro" id="IPR013810">
    <property type="entry name" value="Ribosomal_uS5_N"/>
</dbReference>
<dbReference type="InterPro" id="IPR018192">
    <property type="entry name" value="Ribosomal_uS5_N_CS"/>
</dbReference>
<dbReference type="InterPro" id="IPR014721">
    <property type="entry name" value="Ribsml_uS5_D2-typ_fold_subgr"/>
</dbReference>
<dbReference type="NCBIfam" id="TIGR01021">
    <property type="entry name" value="rpsE_bact"/>
    <property type="match status" value="1"/>
</dbReference>
<dbReference type="PANTHER" id="PTHR48277">
    <property type="entry name" value="MITOCHONDRIAL RIBOSOMAL PROTEIN S5"/>
    <property type="match status" value="1"/>
</dbReference>
<dbReference type="PANTHER" id="PTHR48277:SF1">
    <property type="entry name" value="MITOCHONDRIAL RIBOSOMAL PROTEIN S5"/>
    <property type="match status" value="1"/>
</dbReference>
<dbReference type="Pfam" id="PF00333">
    <property type="entry name" value="Ribosomal_S5"/>
    <property type="match status" value="1"/>
</dbReference>
<dbReference type="Pfam" id="PF03719">
    <property type="entry name" value="Ribosomal_S5_C"/>
    <property type="match status" value="1"/>
</dbReference>
<dbReference type="SUPFAM" id="SSF54768">
    <property type="entry name" value="dsRNA-binding domain-like"/>
    <property type="match status" value="1"/>
</dbReference>
<dbReference type="SUPFAM" id="SSF54211">
    <property type="entry name" value="Ribosomal protein S5 domain 2-like"/>
    <property type="match status" value="1"/>
</dbReference>
<dbReference type="PROSITE" id="PS00585">
    <property type="entry name" value="RIBOSOMAL_S5"/>
    <property type="match status" value="1"/>
</dbReference>
<dbReference type="PROSITE" id="PS50881">
    <property type="entry name" value="S5_DSRBD"/>
    <property type="match status" value="1"/>
</dbReference>
<protein>
    <recommendedName>
        <fullName evidence="1">Small ribosomal subunit protein uS5</fullName>
    </recommendedName>
    <alternativeName>
        <fullName evidence="2">30S ribosomal protein S5</fullName>
    </alternativeName>
</protein>
<comment type="function">
    <text evidence="1">With S4 and S12 plays an important role in translational accuracy.</text>
</comment>
<comment type="function">
    <text evidence="1">Located at the back of the 30S subunit body where it stabilizes the conformation of the head with respect to the body.</text>
</comment>
<comment type="subunit">
    <text evidence="1">Part of the 30S ribosomal subunit. Contacts proteins S4 and S8.</text>
</comment>
<comment type="domain">
    <text>The N-terminal domain interacts with the head of the 30S subunit; the C-terminal domain interacts with the body and contacts protein S4. The interaction surface between S4 and S5 is involved in control of translational fidelity.</text>
</comment>
<comment type="similarity">
    <text evidence="1">Belongs to the universal ribosomal protein uS5 family.</text>
</comment>
<evidence type="ECO:0000255" key="1">
    <source>
        <dbReference type="HAMAP-Rule" id="MF_01307"/>
    </source>
</evidence>
<evidence type="ECO:0000305" key="2"/>
<feature type="chain" id="PRO_0000131464" description="Small ribosomal subunit protein uS5">
    <location>
        <begin position="1"/>
        <end position="172"/>
    </location>
</feature>
<feature type="domain" description="S5 DRBM" evidence="1">
    <location>
        <begin position="16"/>
        <end position="79"/>
    </location>
</feature>
<keyword id="KW-0687">Ribonucleoprotein</keyword>
<keyword id="KW-0689">Ribosomal protein</keyword>
<keyword id="KW-0694">RNA-binding</keyword>
<keyword id="KW-0699">rRNA-binding</keyword>
<sequence length="172" mass="17946">MAGVNNRVKITNDIELKDRLVAINRVTKVTKGGRTFSFSAIVVVGNEEGIIGWGLGKAGEVTAAIAKGVESAKKNLTRVPVLKGTVPHEQSAKFGGAEVFIKPASHGTGVVAGGAMRAVLESVGVTDVLAKSKGSSNPHNLVKATIMALGEMRDARMIAQNRGISVEKVFRG</sequence>
<accession>Q64NM5</accession>
<name>RS5_BACFR</name>
<proteinExistence type="inferred from homology"/>
<gene>
    <name evidence="1" type="primary">rpsE</name>
    <name type="ordered locus">BF4164</name>
</gene>
<reference key="1">
    <citation type="journal article" date="2004" name="Proc. Natl. Acad. Sci. U.S.A.">
        <title>Genomic analysis of Bacteroides fragilis reveals extensive DNA inversions regulating cell surface adaptation.</title>
        <authorList>
            <person name="Kuwahara T."/>
            <person name="Yamashita A."/>
            <person name="Hirakawa H."/>
            <person name="Nakayama H."/>
            <person name="Toh H."/>
            <person name="Okada N."/>
            <person name="Kuhara S."/>
            <person name="Hattori M."/>
            <person name="Hayashi T."/>
            <person name="Ohnishi Y."/>
        </authorList>
    </citation>
    <scope>NUCLEOTIDE SEQUENCE [LARGE SCALE GENOMIC DNA]</scope>
    <source>
        <strain>YCH46</strain>
    </source>
</reference>